<sequence>MHAKSLTELRAALAAKECSAVELAQHYLKRIDAARDLNAFVHVDADLTLAQAKAADAELARGAGGALTGLPIAHKDVFVTRGWRSTAGSKMLANYESPFDATVVARLQAAGMVTLGKTNMDEFAMGSSNENSAFGAVKNPWDTNAVPGGSSGGSSAAVAARLAPAATGTDTGGSIRQPASFAGVTGIKPTYGRVSRYGMIAFASSLDQGGPMAQSASDCALLLNAMAGFDERDSTSLERDDEDFTRHLGQPWAAGNDAGKPLAGLRIGLPNEYFGAGLADDVRATIDAALKQYEALGATLVPVSLPKTELSIPVYYVIAPAEASSNLSRFDGVRFGHRAAQYGDLLDMYKKSRAEGFGPEVKRRILVGTYVLSHGYYDAYYLQAQKIRRIIANDFQEAFKSCDVIMGPASPTVAWDLGAKGDDPVQMYLADIYTLSVSLAGLPGMSVPCGFGAGANAKRPVGLQIIGNYFNEARMLQVADAFQRATDWHKQVPAGV</sequence>
<evidence type="ECO:0000255" key="1">
    <source>
        <dbReference type="HAMAP-Rule" id="MF_00120"/>
    </source>
</evidence>
<feature type="chain" id="PRO_1000095112" description="Glutamyl-tRNA(Gln) amidotransferase subunit A">
    <location>
        <begin position="1"/>
        <end position="496"/>
    </location>
</feature>
<feature type="active site" description="Charge relay system" evidence="1">
    <location>
        <position position="75"/>
    </location>
</feature>
<feature type="active site" description="Charge relay system" evidence="1">
    <location>
        <position position="150"/>
    </location>
</feature>
<feature type="active site" description="Acyl-ester intermediate" evidence="1">
    <location>
        <position position="174"/>
    </location>
</feature>
<protein>
    <recommendedName>
        <fullName evidence="1">Glutamyl-tRNA(Gln) amidotransferase subunit A</fullName>
        <shortName evidence="1">Glu-ADT subunit A</shortName>
        <ecNumber evidence="1">6.3.5.7</ecNumber>
    </recommendedName>
</protein>
<keyword id="KW-0067">ATP-binding</keyword>
<keyword id="KW-0436">Ligase</keyword>
<keyword id="KW-0547">Nucleotide-binding</keyword>
<keyword id="KW-0648">Protein biosynthesis</keyword>
<proteinExistence type="inferred from homology"/>
<accession>B1K0H7</accession>
<gene>
    <name evidence="1" type="primary">gatA</name>
    <name type="ordered locus">Bcenmc03_3124</name>
</gene>
<comment type="function">
    <text evidence="1">Allows the formation of correctly charged Gln-tRNA(Gln) through the transamidation of misacylated Glu-tRNA(Gln) in organisms which lack glutaminyl-tRNA synthetase. The reaction takes place in the presence of glutamine and ATP through an activated gamma-phospho-Glu-tRNA(Gln).</text>
</comment>
<comment type="catalytic activity">
    <reaction evidence="1">
        <text>L-glutamyl-tRNA(Gln) + L-glutamine + ATP + H2O = L-glutaminyl-tRNA(Gln) + L-glutamate + ADP + phosphate + H(+)</text>
        <dbReference type="Rhea" id="RHEA:17521"/>
        <dbReference type="Rhea" id="RHEA-COMP:9681"/>
        <dbReference type="Rhea" id="RHEA-COMP:9684"/>
        <dbReference type="ChEBI" id="CHEBI:15377"/>
        <dbReference type="ChEBI" id="CHEBI:15378"/>
        <dbReference type="ChEBI" id="CHEBI:29985"/>
        <dbReference type="ChEBI" id="CHEBI:30616"/>
        <dbReference type="ChEBI" id="CHEBI:43474"/>
        <dbReference type="ChEBI" id="CHEBI:58359"/>
        <dbReference type="ChEBI" id="CHEBI:78520"/>
        <dbReference type="ChEBI" id="CHEBI:78521"/>
        <dbReference type="ChEBI" id="CHEBI:456216"/>
        <dbReference type="EC" id="6.3.5.7"/>
    </reaction>
</comment>
<comment type="subunit">
    <text evidence="1">Heterotrimer of A, B and C subunits.</text>
</comment>
<comment type="similarity">
    <text evidence="1">Belongs to the amidase family. GatA subfamily.</text>
</comment>
<name>GATA_BURO0</name>
<dbReference type="EC" id="6.3.5.7" evidence="1"/>
<dbReference type="EMBL" id="CP000958">
    <property type="protein sequence ID" value="ACA92282.1"/>
    <property type="molecule type" value="Genomic_DNA"/>
</dbReference>
<dbReference type="RefSeq" id="WP_011546474.1">
    <property type="nucleotide sequence ID" value="NC_010508.1"/>
</dbReference>
<dbReference type="SMR" id="B1K0H7"/>
<dbReference type="GeneID" id="83049905"/>
<dbReference type="KEGG" id="bcm:Bcenmc03_3124"/>
<dbReference type="HOGENOM" id="CLU_009600_0_3_4"/>
<dbReference type="Proteomes" id="UP000002169">
    <property type="component" value="Chromosome 1"/>
</dbReference>
<dbReference type="GO" id="GO:0030956">
    <property type="term" value="C:glutamyl-tRNA(Gln) amidotransferase complex"/>
    <property type="evidence" value="ECO:0007669"/>
    <property type="project" value="InterPro"/>
</dbReference>
<dbReference type="GO" id="GO:0005524">
    <property type="term" value="F:ATP binding"/>
    <property type="evidence" value="ECO:0007669"/>
    <property type="project" value="UniProtKB-KW"/>
</dbReference>
<dbReference type="GO" id="GO:0050567">
    <property type="term" value="F:glutaminyl-tRNA synthase (glutamine-hydrolyzing) activity"/>
    <property type="evidence" value="ECO:0007669"/>
    <property type="project" value="UniProtKB-UniRule"/>
</dbReference>
<dbReference type="GO" id="GO:0006412">
    <property type="term" value="P:translation"/>
    <property type="evidence" value="ECO:0007669"/>
    <property type="project" value="UniProtKB-UniRule"/>
</dbReference>
<dbReference type="Gene3D" id="3.90.1300.10">
    <property type="entry name" value="Amidase signature (AS) domain"/>
    <property type="match status" value="1"/>
</dbReference>
<dbReference type="HAMAP" id="MF_00120">
    <property type="entry name" value="GatA"/>
    <property type="match status" value="1"/>
</dbReference>
<dbReference type="InterPro" id="IPR000120">
    <property type="entry name" value="Amidase"/>
</dbReference>
<dbReference type="InterPro" id="IPR020556">
    <property type="entry name" value="Amidase_CS"/>
</dbReference>
<dbReference type="InterPro" id="IPR023631">
    <property type="entry name" value="Amidase_dom"/>
</dbReference>
<dbReference type="InterPro" id="IPR036928">
    <property type="entry name" value="AS_sf"/>
</dbReference>
<dbReference type="InterPro" id="IPR004412">
    <property type="entry name" value="GatA"/>
</dbReference>
<dbReference type="NCBIfam" id="TIGR00132">
    <property type="entry name" value="gatA"/>
    <property type="match status" value="1"/>
</dbReference>
<dbReference type="PANTHER" id="PTHR11895:SF151">
    <property type="entry name" value="GLUTAMYL-TRNA(GLN) AMIDOTRANSFERASE SUBUNIT A"/>
    <property type="match status" value="1"/>
</dbReference>
<dbReference type="PANTHER" id="PTHR11895">
    <property type="entry name" value="TRANSAMIDASE"/>
    <property type="match status" value="1"/>
</dbReference>
<dbReference type="Pfam" id="PF01425">
    <property type="entry name" value="Amidase"/>
    <property type="match status" value="1"/>
</dbReference>
<dbReference type="SUPFAM" id="SSF75304">
    <property type="entry name" value="Amidase signature (AS) enzymes"/>
    <property type="match status" value="1"/>
</dbReference>
<dbReference type="PROSITE" id="PS00571">
    <property type="entry name" value="AMIDASES"/>
    <property type="match status" value="1"/>
</dbReference>
<reference key="1">
    <citation type="submission" date="2008-02" db="EMBL/GenBank/DDBJ databases">
        <title>Complete sequence of chromosome 1 of Burkholderia cenocepacia MC0-3.</title>
        <authorList>
            <person name="Copeland A."/>
            <person name="Lucas S."/>
            <person name="Lapidus A."/>
            <person name="Barry K."/>
            <person name="Bruce D."/>
            <person name="Goodwin L."/>
            <person name="Glavina del Rio T."/>
            <person name="Dalin E."/>
            <person name="Tice H."/>
            <person name="Pitluck S."/>
            <person name="Chain P."/>
            <person name="Malfatti S."/>
            <person name="Shin M."/>
            <person name="Vergez L."/>
            <person name="Schmutz J."/>
            <person name="Larimer F."/>
            <person name="Land M."/>
            <person name="Hauser L."/>
            <person name="Kyrpides N."/>
            <person name="Mikhailova N."/>
            <person name="Tiedje J."/>
            <person name="Richardson P."/>
        </authorList>
    </citation>
    <scope>NUCLEOTIDE SEQUENCE [LARGE SCALE GENOMIC DNA]</scope>
    <source>
        <strain>MC0-3</strain>
    </source>
</reference>
<organism>
    <name type="scientific">Burkholderia orbicola (strain MC0-3)</name>
    <dbReference type="NCBI Taxonomy" id="406425"/>
    <lineage>
        <taxon>Bacteria</taxon>
        <taxon>Pseudomonadati</taxon>
        <taxon>Pseudomonadota</taxon>
        <taxon>Betaproteobacteria</taxon>
        <taxon>Burkholderiales</taxon>
        <taxon>Burkholderiaceae</taxon>
        <taxon>Burkholderia</taxon>
        <taxon>Burkholderia cepacia complex</taxon>
        <taxon>Burkholderia orbicola</taxon>
    </lineage>
</organism>